<gene>
    <name type="primary">ranbp9</name>
    <name type="synonym">ranbpm</name>
</gene>
<accession>Q9PTY5</accession>
<accession>Q05AW0</accession>
<name>RANB9_XENLA</name>
<reference key="1">
    <citation type="submission" date="1998-10" db="EMBL/GenBank/DDBJ databases">
        <title>Xenopus RanBPM.</title>
        <authorList>
            <person name="Ohba T."/>
        </authorList>
    </citation>
    <scope>NUCLEOTIDE SEQUENCE [MRNA]</scope>
</reference>
<reference key="2">
    <citation type="submission" date="2006-09" db="EMBL/GenBank/DDBJ databases">
        <authorList>
            <consortium name="NIH - Xenopus Gene Collection (XGC) project"/>
        </authorList>
    </citation>
    <scope>NUCLEOTIDE SEQUENCE [LARGE SCALE MRNA] OF 97-548</scope>
    <source>
        <tissue>Liver</tissue>
    </source>
</reference>
<protein>
    <recommendedName>
        <fullName>Ran-binding protein 9</fullName>
        <shortName>RanBP9</shortName>
    </recommendedName>
    <alternativeName>
        <fullName>Ran-binding protein M</fullName>
        <shortName>RanBPM</shortName>
    </alternativeName>
</protein>
<sequence length="548" mass="60482">MSSPPLHGLSSVGHLSRDPPPRSWSPRDKCSYLGLSHGNLRVHYKGHGKTSKDAASVRSTHPIPAACGIFYFEVKIISKGRDGYMGIGLSTQGVNLNRLPGWDKHSYGYHGDDGHSFCSSGTGQPYGPTFTTGDVIGCCVNLIDNTCFYTKNGHSLGIAFTDLPPNLYPTVGLQTPGEVVDANFGQSPFVFDIEDYIREWRSKIQAQIERFPVAGEWQSMIQRMVSSYLVHHGYCSTAEAFAKSTDQTVQEELASIKNRQRIQKLVLSGRMGEAIETTQQLYPSLLERNPNLLFTLKVRQFIEMVNGTDSEVRCLGNRSLKSPDGCLGSDSNCSNGIISNKAHQTHCHSKSQSSNLNVTELNSINMTMSHQLNSYSSNDVEMETDHYSNGFSASTSNGFLNGSSRHEPELEECDTEMEVDTSHGRRQLCGGSQAAVERMICFGRELQAMSEQLRRERGKNATNKNMLKDAFSLLAYSDPWNSPVGYQLDPIQREHVCSSLNSAILDIHNLPKQPPLSLALEQASQCLEMMAQCGIGSCAFARVADYLH</sequence>
<dbReference type="EMBL" id="AB018696">
    <property type="protein sequence ID" value="BAA88895.1"/>
    <property type="molecule type" value="mRNA"/>
</dbReference>
<dbReference type="EMBL" id="BC123283">
    <property type="protein sequence ID" value="AAI23284.1"/>
    <property type="molecule type" value="mRNA"/>
</dbReference>
<dbReference type="RefSeq" id="NP_001165647.1">
    <property type="nucleotide sequence ID" value="NM_001172176.1"/>
</dbReference>
<dbReference type="SMR" id="Q9PTY5"/>
<dbReference type="GeneID" id="398677"/>
<dbReference type="KEGG" id="xla:398677"/>
<dbReference type="AGR" id="Xenbase:XB-GENE-6255763"/>
<dbReference type="CTD" id="398677"/>
<dbReference type="Xenbase" id="XB-GENE-6255763">
    <property type="gene designation" value="ranbp9.L"/>
</dbReference>
<dbReference type="OrthoDB" id="25503at2759"/>
<dbReference type="Proteomes" id="UP000186698">
    <property type="component" value="Chromosome 6L"/>
</dbReference>
<dbReference type="Bgee" id="398677">
    <property type="expression patterns" value="Expressed in egg cell and 19 other cell types or tissues"/>
</dbReference>
<dbReference type="GO" id="GO:0005737">
    <property type="term" value="C:cytoplasm"/>
    <property type="evidence" value="ECO:0000250"/>
    <property type="project" value="UniProtKB"/>
</dbReference>
<dbReference type="GO" id="GO:0005634">
    <property type="term" value="C:nucleus"/>
    <property type="evidence" value="ECO:0000250"/>
    <property type="project" value="UniProtKB"/>
</dbReference>
<dbReference type="GO" id="GO:0005886">
    <property type="term" value="C:plasma membrane"/>
    <property type="evidence" value="ECO:0007669"/>
    <property type="project" value="UniProtKB-SubCell"/>
</dbReference>
<dbReference type="GO" id="GO:0007010">
    <property type="term" value="P:cytoskeleton organization"/>
    <property type="evidence" value="ECO:0000318"/>
    <property type="project" value="GO_Central"/>
</dbReference>
<dbReference type="CDD" id="cd12909">
    <property type="entry name" value="SPRY_RanBP9_10"/>
    <property type="match status" value="1"/>
</dbReference>
<dbReference type="FunFam" id="2.60.120.920:FF:000011">
    <property type="entry name" value="RAN binding protein 10"/>
    <property type="match status" value="1"/>
</dbReference>
<dbReference type="Gene3D" id="2.60.120.920">
    <property type="match status" value="1"/>
</dbReference>
<dbReference type="InterPro" id="IPR001870">
    <property type="entry name" value="B30.2/SPRY"/>
</dbReference>
<dbReference type="InterPro" id="IPR043136">
    <property type="entry name" value="B30.2/SPRY_sf"/>
</dbReference>
<dbReference type="InterPro" id="IPR013320">
    <property type="entry name" value="ConA-like_dom_sf"/>
</dbReference>
<dbReference type="InterPro" id="IPR013144">
    <property type="entry name" value="CRA_dom"/>
</dbReference>
<dbReference type="InterPro" id="IPR024964">
    <property type="entry name" value="CTLH/CRA"/>
</dbReference>
<dbReference type="InterPro" id="IPR006595">
    <property type="entry name" value="CTLH_C"/>
</dbReference>
<dbReference type="InterPro" id="IPR006594">
    <property type="entry name" value="LisH"/>
</dbReference>
<dbReference type="InterPro" id="IPR003877">
    <property type="entry name" value="SPRY_dom"/>
</dbReference>
<dbReference type="InterPro" id="IPR035782">
    <property type="entry name" value="SPRY_RanBP9/10"/>
</dbReference>
<dbReference type="InterPro" id="IPR050618">
    <property type="entry name" value="Ubq-SigPath_Reg"/>
</dbReference>
<dbReference type="PANTHER" id="PTHR12864">
    <property type="entry name" value="RAN BINDING PROTEIN 9-RELATED"/>
    <property type="match status" value="1"/>
</dbReference>
<dbReference type="Pfam" id="PF10607">
    <property type="entry name" value="CTLH"/>
    <property type="match status" value="2"/>
</dbReference>
<dbReference type="Pfam" id="PF08513">
    <property type="entry name" value="LisH"/>
    <property type="match status" value="1"/>
</dbReference>
<dbReference type="Pfam" id="PF00622">
    <property type="entry name" value="SPRY"/>
    <property type="match status" value="1"/>
</dbReference>
<dbReference type="SMART" id="SM00757">
    <property type="entry name" value="CRA"/>
    <property type="match status" value="1"/>
</dbReference>
<dbReference type="SMART" id="SM00668">
    <property type="entry name" value="CTLH"/>
    <property type="match status" value="1"/>
</dbReference>
<dbReference type="SMART" id="SM00667">
    <property type="entry name" value="LisH"/>
    <property type="match status" value="1"/>
</dbReference>
<dbReference type="SMART" id="SM00449">
    <property type="entry name" value="SPRY"/>
    <property type="match status" value="1"/>
</dbReference>
<dbReference type="SUPFAM" id="SSF49899">
    <property type="entry name" value="Concanavalin A-like lectins/glucanases"/>
    <property type="match status" value="1"/>
</dbReference>
<dbReference type="PROSITE" id="PS50188">
    <property type="entry name" value="B302_SPRY"/>
    <property type="match status" value="1"/>
</dbReference>
<dbReference type="PROSITE" id="PS50897">
    <property type="entry name" value="CTLH"/>
    <property type="match status" value="1"/>
</dbReference>
<dbReference type="PROSITE" id="PS50896">
    <property type="entry name" value="LISH"/>
    <property type="match status" value="1"/>
</dbReference>
<organism>
    <name type="scientific">Xenopus laevis</name>
    <name type="common">African clawed frog</name>
    <dbReference type="NCBI Taxonomy" id="8355"/>
    <lineage>
        <taxon>Eukaryota</taxon>
        <taxon>Metazoa</taxon>
        <taxon>Chordata</taxon>
        <taxon>Craniata</taxon>
        <taxon>Vertebrata</taxon>
        <taxon>Euteleostomi</taxon>
        <taxon>Amphibia</taxon>
        <taxon>Batrachia</taxon>
        <taxon>Anura</taxon>
        <taxon>Pipoidea</taxon>
        <taxon>Pipidae</taxon>
        <taxon>Xenopodinae</taxon>
        <taxon>Xenopus</taxon>
        <taxon>Xenopus</taxon>
    </lineage>
</organism>
<feature type="chain" id="PRO_0000305234" description="Ran-binding protein 9">
    <location>
        <begin position="1"/>
        <end position="548"/>
    </location>
</feature>
<feature type="domain" description="B30.2/SPRY" evidence="5">
    <location>
        <begin position="2"/>
        <end position="189"/>
    </location>
</feature>
<feature type="domain" description="LisH" evidence="4">
    <location>
        <begin position="217"/>
        <end position="249"/>
    </location>
</feature>
<feature type="domain" description="CTLH" evidence="3">
    <location>
        <begin position="255"/>
        <end position="312"/>
    </location>
</feature>
<feature type="region of interest" description="Disordered" evidence="6">
    <location>
        <begin position="1"/>
        <end position="23"/>
    </location>
</feature>
<proteinExistence type="evidence at transcript level"/>
<comment type="function">
    <text evidence="2">May act as scaffolding protein, and as adapter protein to couple membrane receptors to intracellular signaling pathways. Acts as a mediator of cell spreading and actin cytoskeleton rearrangement. Core component of the CTLH E3 ubiquitin-protein ligase complex that mediates ubiquitination and subsequent proteasomal degradation of target proteins.</text>
</comment>
<comment type="subunit">
    <text evidence="2">Identified in the CTLH complex that contains at least MAEA, RMND5A (or alternatively its paralog RMND5B), GID8, WDR26, and RANBP9 and/or RANBP10.</text>
</comment>
<comment type="subcellular location">
    <subcellularLocation>
        <location evidence="1">Cytoplasm</location>
    </subcellularLocation>
    <subcellularLocation>
        <location evidence="1">Cell membrane</location>
        <topology evidence="1">Peripheral membrane protein</topology>
        <orientation evidence="1">Cytoplasmic side</orientation>
    </subcellularLocation>
    <subcellularLocation>
        <location evidence="1">Nucleus</location>
    </subcellularLocation>
    <text evidence="1">Predominantly cytoplasmic.</text>
</comment>
<comment type="similarity">
    <text evidence="7">Belongs to the RANBP9/10 family.</text>
</comment>
<keyword id="KW-1003">Cell membrane</keyword>
<keyword id="KW-0963">Cytoplasm</keyword>
<keyword id="KW-0472">Membrane</keyword>
<keyword id="KW-0539">Nucleus</keyword>
<keyword id="KW-1185">Reference proteome</keyword>
<evidence type="ECO:0000250" key="1">
    <source>
        <dbReference type="UniProtKB" id="P69566"/>
    </source>
</evidence>
<evidence type="ECO:0000250" key="2">
    <source>
        <dbReference type="UniProtKB" id="Q96S59"/>
    </source>
</evidence>
<evidence type="ECO:0000255" key="3">
    <source>
        <dbReference type="PROSITE-ProRule" id="PRU00058"/>
    </source>
</evidence>
<evidence type="ECO:0000255" key="4">
    <source>
        <dbReference type="PROSITE-ProRule" id="PRU00126"/>
    </source>
</evidence>
<evidence type="ECO:0000255" key="5">
    <source>
        <dbReference type="PROSITE-ProRule" id="PRU00548"/>
    </source>
</evidence>
<evidence type="ECO:0000256" key="6">
    <source>
        <dbReference type="SAM" id="MobiDB-lite"/>
    </source>
</evidence>
<evidence type="ECO:0000305" key="7"/>